<evidence type="ECO:0000255" key="1">
    <source>
        <dbReference type="HAMAP-Rule" id="MF_01394"/>
    </source>
</evidence>
<dbReference type="EC" id="7.1.1.-" evidence="1"/>
<dbReference type="EMBL" id="CP000151">
    <property type="protein sequence ID" value="ABB09171.1"/>
    <property type="molecule type" value="Genomic_DNA"/>
</dbReference>
<dbReference type="RefSeq" id="WP_006398798.1">
    <property type="nucleotide sequence ID" value="NZ_WNDV01000048.1"/>
</dbReference>
<dbReference type="SMR" id="Q39EE5"/>
<dbReference type="KEGG" id="bur:Bcep18194_A5577"/>
<dbReference type="HOGENOM" id="CLU_119549_3_1_4"/>
<dbReference type="Proteomes" id="UP000002705">
    <property type="component" value="Chromosome 1"/>
</dbReference>
<dbReference type="GO" id="GO:0030964">
    <property type="term" value="C:NADH dehydrogenase complex"/>
    <property type="evidence" value="ECO:0007669"/>
    <property type="project" value="TreeGrafter"/>
</dbReference>
<dbReference type="GO" id="GO:0005886">
    <property type="term" value="C:plasma membrane"/>
    <property type="evidence" value="ECO:0007669"/>
    <property type="project" value="UniProtKB-SubCell"/>
</dbReference>
<dbReference type="GO" id="GO:0008137">
    <property type="term" value="F:NADH dehydrogenase (ubiquinone) activity"/>
    <property type="evidence" value="ECO:0007669"/>
    <property type="project" value="InterPro"/>
</dbReference>
<dbReference type="GO" id="GO:0050136">
    <property type="term" value="F:NADH:ubiquinone reductase (non-electrogenic) activity"/>
    <property type="evidence" value="ECO:0007669"/>
    <property type="project" value="UniProtKB-UniRule"/>
</dbReference>
<dbReference type="GO" id="GO:0048038">
    <property type="term" value="F:quinone binding"/>
    <property type="evidence" value="ECO:0007669"/>
    <property type="project" value="UniProtKB-KW"/>
</dbReference>
<dbReference type="FunFam" id="1.20.58.1610:FF:000004">
    <property type="entry name" value="NADH-quinone oxidoreductase subunit A"/>
    <property type="match status" value="1"/>
</dbReference>
<dbReference type="Gene3D" id="1.20.58.1610">
    <property type="entry name" value="NADH:ubiquinone/plastoquinone oxidoreductase, chain 3"/>
    <property type="match status" value="1"/>
</dbReference>
<dbReference type="HAMAP" id="MF_01394">
    <property type="entry name" value="NDH1_NuoA"/>
    <property type="match status" value="1"/>
</dbReference>
<dbReference type="InterPro" id="IPR023043">
    <property type="entry name" value="NAD(P)H_OxRDtase_bac/plastid"/>
</dbReference>
<dbReference type="InterPro" id="IPR000440">
    <property type="entry name" value="NADH_UbQ/plastoQ_OxRdtase_su3"/>
</dbReference>
<dbReference type="InterPro" id="IPR038430">
    <property type="entry name" value="NDAH_ubi_oxred_su3_sf"/>
</dbReference>
<dbReference type="PANTHER" id="PTHR11058">
    <property type="entry name" value="NADH-UBIQUINONE OXIDOREDUCTASE CHAIN 3"/>
    <property type="match status" value="1"/>
</dbReference>
<dbReference type="PANTHER" id="PTHR11058:SF9">
    <property type="entry name" value="NADH-UBIQUINONE OXIDOREDUCTASE CHAIN 3"/>
    <property type="match status" value="1"/>
</dbReference>
<dbReference type="Pfam" id="PF00507">
    <property type="entry name" value="Oxidored_q4"/>
    <property type="match status" value="1"/>
</dbReference>
<protein>
    <recommendedName>
        <fullName evidence="1">NADH-quinone oxidoreductase subunit A</fullName>
        <ecNumber evidence="1">7.1.1.-</ecNumber>
    </recommendedName>
    <alternativeName>
        <fullName evidence="1">NADH dehydrogenase I subunit A</fullName>
    </alternativeName>
    <alternativeName>
        <fullName evidence="1">NDH-1 subunit A</fullName>
    </alternativeName>
    <alternativeName>
        <fullName evidence="1">NUO1</fullName>
    </alternativeName>
</protein>
<organism>
    <name type="scientific">Burkholderia lata (strain ATCC 17760 / DSM 23089 / LMG 22485 / NCIMB 9086 / R18194 / 383)</name>
    <dbReference type="NCBI Taxonomy" id="482957"/>
    <lineage>
        <taxon>Bacteria</taxon>
        <taxon>Pseudomonadati</taxon>
        <taxon>Pseudomonadota</taxon>
        <taxon>Betaproteobacteria</taxon>
        <taxon>Burkholderiales</taxon>
        <taxon>Burkholderiaceae</taxon>
        <taxon>Burkholderia</taxon>
        <taxon>Burkholderia cepacia complex</taxon>
    </lineage>
</organism>
<proteinExistence type="inferred from homology"/>
<feature type="chain" id="PRO_0000362649" description="NADH-quinone oxidoreductase subunit A">
    <location>
        <begin position="1"/>
        <end position="119"/>
    </location>
</feature>
<feature type="transmembrane region" description="Helical" evidence="1">
    <location>
        <begin position="7"/>
        <end position="27"/>
    </location>
</feature>
<feature type="transmembrane region" description="Helical" evidence="1">
    <location>
        <begin position="63"/>
        <end position="83"/>
    </location>
</feature>
<feature type="transmembrane region" description="Helical" evidence="1">
    <location>
        <begin position="88"/>
        <end position="108"/>
    </location>
</feature>
<name>NUOA_BURL3</name>
<keyword id="KW-0997">Cell inner membrane</keyword>
<keyword id="KW-1003">Cell membrane</keyword>
<keyword id="KW-0472">Membrane</keyword>
<keyword id="KW-0520">NAD</keyword>
<keyword id="KW-0874">Quinone</keyword>
<keyword id="KW-1278">Translocase</keyword>
<keyword id="KW-0812">Transmembrane</keyword>
<keyword id="KW-1133">Transmembrane helix</keyword>
<keyword id="KW-0813">Transport</keyword>
<keyword id="KW-0830">Ubiquinone</keyword>
<comment type="function">
    <text evidence="1">NDH-1 shuttles electrons from NADH, via FMN and iron-sulfur (Fe-S) centers, to quinones in the respiratory chain. The immediate electron acceptor for the enzyme in this species is believed to be ubiquinone. Couples the redox reaction to proton translocation (for every two electrons transferred, four hydrogen ions are translocated across the cytoplasmic membrane), and thus conserves the redox energy in a proton gradient.</text>
</comment>
<comment type="catalytic activity">
    <reaction evidence="1">
        <text>a quinone + NADH + 5 H(+)(in) = a quinol + NAD(+) + 4 H(+)(out)</text>
        <dbReference type="Rhea" id="RHEA:57888"/>
        <dbReference type="ChEBI" id="CHEBI:15378"/>
        <dbReference type="ChEBI" id="CHEBI:24646"/>
        <dbReference type="ChEBI" id="CHEBI:57540"/>
        <dbReference type="ChEBI" id="CHEBI:57945"/>
        <dbReference type="ChEBI" id="CHEBI:132124"/>
    </reaction>
</comment>
<comment type="subunit">
    <text evidence="1">NDH-1 is composed of 14 different subunits. Subunits NuoA, H, J, K, L, M, N constitute the membrane sector of the complex.</text>
</comment>
<comment type="subcellular location">
    <subcellularLocation>
        <location evidence="1">Cell inner membrane</location>
        <topology evidence="1">Multi-pass membrane protein</topology>
    </subcellularLocation>
</comment>
<comment type="similarity">
    <text evidence="1">Belongs to the complex I subunit 3 family.</text>
</comment>
<reference key="1">
    <citation type="submission" date="2005-10" db="EMBL/GenBank/DDBJ databases">
        <title>Complete sequence of chromosome 1 of Burkholderia sp. 383.</title>
        <authorList>
            <consortium name="US DOE Joint Genome Institute"/>
            <person name="Copeland A."/>
            <person name="Lucas S."/>
            <person name="Lapidus A."/>
            <person name="Barry K."/>
            <person name="Detter J.C."/>
            <person name="Glavina T."/>
            <person name="Hammon N."/>
            <person name="Israni S."/>
            <person name="Pitluck S."/>
            <person name="Chain P."/>
            <person name="Malfatti S."/>
            <person name="Shin M."/>
            <person name="Vergez L."/>
            <person name="Schmutz J."/>
            <person name="Larimer F."/>
            <person name="Land M."/>
            <person name="Kyrpides N."/>
            <person name="Lykidis A."/>
            <person name="Richardson P."/>
        </authorList>
    </citation>
    <scope>NUCLEOTIDE SEQUENCE [LARGE SCALE GENOMIC DNA]</scope>
    <source>
        <strain>ATCC 17760 / DSM 23089 / LMG 22485 / NCIMB 9086 / R18194 / 383</strain>
    </source>
</reference>
<gene>
    <name evidence="1" type="primary">nuoA</name>
    <name type="ordered locus">Bcep18194_A5577</name>
</gene>
<sequence length="119" mass="13511">MNLAAYYPVLLFLLVGTGLGIALVSIGKLLGPNKPDVEKNAPYECGFEAFEDARMKFDVRYYLVAILFIIFDLETAFLFPWGVALRDIGWPGFIAMMIFLLEFLLGFAYIWKKGGLDWE</sequence>
<accession>Q39EE5</accession>